<keyword id="KW-1185">Reference proteome</keyword>
<keyword id="KW-0687">Ribonucleoprotein</keyword>
<keyword id="KW-0689">Ribosomal protein</keyword>
<accession>Q7MTP1</accession>
<reference key="1">
    <citation type="journal article" date="2003" name="J. Bacteriol.">
        <title>Complete genome sequence of the oral pathogenic bacterium Porphyromonas gingivalis strain W83.</title>
        <authorList>
            <person name="Nelson K.E."/>
            <person name="Fleischmann R.D."/>
            <person name="DeBoy R.T."/>
            <person name="Paulsen I.T."/>
            <person name="Fouts D.E."/>
            <person name="Eisen J.A."/>
            <person name="Daugherty S.C."/>
            <person name="Dodson R.J."/>
            <person name="Durkin A.S."/>
            <person name="Gwinn M.L."/>
            <person name="Haft D.H."/>
            <person name="Kolonay J.F."/>
            <person name="Nelson W.C."/>
            <person name="Mason T.M."/>
            <person name="Tallon L."/>
            <person name="Gray J."/>
            <person name="Granger D."/>
            <person name="Tettelin H."/>
            <person name="Dong H."/>
            <person name="Galvin J.L."/>
            <person name="Duncan M.J."/>
            <person name="Dewhirst F.E."/>
            <person name="Fraser C.M."/>
        </authorList>
    </citation>
    <scope>NUCLEOTIDE SEQUENCE [LARGE SCALE GENOMIC DNA]</scope>
    <source>
        <strain>ATCC BAA-308 / W83</strain>
    </source>
</reference>
<sequence>MRHNKKFNHLGRKAAHRKAMLSNMAASLILHKRIFTTVAKAKALRIYVEPLLTKTKEDTTHSRRIAFSYLQNKYALKELFGDVAAKIADRPGGYTRILKTGYRLGDNAAMCFIELVDYNENMLGEAAKKATKTRRSRKRKSADVVVEAAPAEETPKAAEE</sequence>
<evidence type="ECO:0000255" key="1">
    <source>
        <dbReference type="HAMAP-Rule" id="MF_01368"/>
    </source>
</evidence>
<evidence type="ECO:0000256" key="2">
    <source>
        <dbReference type="SAM" id="MobiDB-lite"/>
    </source>
</evidence>
<evidence type="ECO:0000305" key="3"/>
<feature type="chain" id="PRO_0000267911" description="Large ribosomal subunit protein bL17">
    <location>
        <begin position="1"/>
        <end position="160"/>
    </location>
</feature>
<feature type="region of interest" description="Disordered" evidence="2">
    <location>
        <begin position="128"/>
        <end position="160"/>
    </location>
</feature>
<feature type="compositionally biased region" description="Basic residues" evidence="2">
    <location>
        <begin position="129"/>
        <end position="140"/>
    </location>
</feature>
<dbReference type="EMBL" id="AE015924">
    <property type="protein sequence ID" value="AAQ66891.1"/>
    <property type="molecule type" value="Genomic_DNA"/>
</dbReference>
<dbReference type="RefSeq" id="WP_005873882.1">
    <property type="nucleotide sequence ID" value="NC_002950.2"/>
</dbReference>
<dbReference type="SMR" id="Q7MTP1"/>
<dbReference type="STRING" id="242619.PG_1910"/>
<dbReference type="EnsemblBacteria" id="AAQ66891">
    <property type="protein sequence ID" value="AAQ66891"/>
    <property type="gene ID" value="PG_1910"/>
</dbReference>
<dbReference type="GeneID" id="29256992"/>
<dbReference type="KEGG" id="pgi:PG_1910"/>
<dbReference type="eggNOG" id="COG0203">
    <property type="taxonomic scope" value="Bacteria"/>
</dbReference>
<dbReference type="HOGENOM" id="CLU_074407_0_1_10"/>
<dbReference type="Proteomes" id="UP000000588">
    <property type="component" value="Chromosome"/>
</dbReference>
<dbReference type="GO" id="GO:0022625">
    <property type="term" value="C:cytosolic large ribosomal subunit"/>
    <property type="evidence" value="ECO:0007669"/>
    <property type="project" value="TreeGrafter"/>
</dbReference>
<dbReference type="GO" id="GO:0003735">
    <property type="term" value="F:structural constituent of ribosome"/>
    <property type="evidence" value="ECO:0007669"/>
    <property type="project" value="InterPro"/>
</dbReference>
<dbReference type="GO" id="GO:0006412">
    <property type="term" value="P:translation"/>
    <property type="evidence" value="ECO:0007669"/>
    <property type="project" value="UniProtKB-UniRule"/>
</dbReference>
<dbReference type="FunFam" id="3.90.1030.10:FF:000006">
    <property type="entry name" value="50S ribosomal protein L17"/>
    <property type="match status" value="1"/>
</dbReference>
<dbReference type="Gene3D" id="3.90.1030.10">
    <property type="entry name" value="Ribosomal protein L17"/>
    <property type="match status" value="1"/>
</dbReference>
<dbReference type="HAMAP" id="MF_01368">
    <property type="entry name" value="Ribosomal_bL17"/>
    <property type="match status" value="1"/>
</dbReference>
<dbReference type="InterPro" id="IPR000456">
    <property type="entry name" value="Ribosomal_bL17"/>
</dbReference>
<dbReference type="InterPro" id="IPR047859">
    <property type="entry name" value="Ribosomal_bL17_CS"/>
</dbReference>
<dbReference type="InterPro" id="IPR036373">
    <property type="entry name" value="Ribosomal_bL17_sf"/>
</dbReference>
<dbReference type="NCBIfam" id="TIGR00059">
    <property type="entry name" value="L17"/>
    <property type="match status" value="1"/>
</dbReference>
<dbReference type="PANTHER" id="PTHR14413:SF16">
    <property type="entry name" value="LARGE RIBOSOMAL SUBUNIT PROTEIN BL17M"/>
    <property type="match status" value="1"/>
</dbReference>
<dbReference type="PANTHER" id="PTHR14413">
    <property type="entry name" value="RIBOSOMAL PROTEIN L17"/>
    <property type="match status" value="1"/>
</dbReference>
<dbReference type="Pfam" id="PF01196">
    <property type="entry name" value="Ribosomal_L17"/>
    <property type="match status" value="1"/>
</dbReference>
<dbReference type="SUPFAM" id="SSF64263">
    <property type="entry name" value="Prokaryotic ribosomal protein L17"/>
    <property type="match status" value="1"/>
</dbReference>
<dbReference type="PROSITE" id="PS01167">
    <property type="entry name" value="RIBOSOMAL_L17"/>
    <property type="match status" value="1"/>
</dbReference>
<protein>
    <recommendedName>
        <fullName evidence="1">Large ribosomal subunit protein bL17</fullName>
    </recommendedName>
    <alternativeName>
        <fullName evidence="3">50S ribosomal protein L17</fullName>
    </alternativeName>
</protein>
<gene>
    <name evidence="1" type="primary">rplQ</name>
    <name type="ordered locus">PG_1910</name>
</gene>
<comment type="subunit">
    <text evidence="1">Part of the 50S ribosomal subunit. Contacts protein L32.</text>
</comment>
<comment type="similarity">
    <text evidence="1">Belongs to the bacterial ribosomal protein bL17 family.</text>
</comment>
<name>RL17_PORGI</name>
<organism>
    <name type="scientific">Porphyromonas gingivalis (strain ATCC BAA-308 / W83)</name>
    <dbReference type="NCBI Taxonomy" id="242619"/>
    <lineage>
        <taxon>Bacteria</taxon>
        <taxon>Pseudomonadati</taxon>
        <taxon>Bacteroidota</taxon>
        <taxon>Bacteroidia</taxon>
        <taxon>Bacteroidales</taxon>
        <taxon>Porphyromonadaceae</taxon>
        <taxon>Porphyromonas</taxon>
    </lineage>
</organism>
<proteinExistence type="inferred from homology"/>